<organism>
    <name type="scientific">Thermosynechococcus vestitus (strain NIES-2133 / IAM M-273 / BP-1)</name>
    <dbReference type="NCBI Taxonomy" id="197221"/>
    <lineage>
        <taxon>Bacteria</taxon>
        <taxon>Bacillati</taxon>
        <taxon>Cyanobacteriota</taxon>
        <taxon>Cyanophyceae</taxon>
        <taxon>Acaryochloridales</taxon>
        <taxon>Thermosynechococcaceae</taxon>
        <taxon>Thermosynechococcus</taxon>
    </lineage>
</organism>
<protein>
    <recommendedName>
        <fullName evidence="1">5-methyltetrahydropteroyltriglutamate--homocysteine methyltransferase</fullName>
        <ecNumber evidence="1">2.1.1.14</ecNumber>
    </recommendedName>
    <alternativeName>
        <fullName evidence="1">Cobalamin-independent methionine synthase</fullName>
    </alternativeName>
    <alternativeName>
        <fullName evidence="1">Methionine synthase, vitamin-B12 independent isozyme</fullName>
    </alternativeName>
</protein>
<gene>
    <name evidence="1" type="primary">metE</name>
    <name type="ordered locus">tlr1090</name>
</gene>
<comment type="function">
    <text evidence="1">Catalyzes the transfer of a methyl group from 5-methyltetrahydrofolate to homocysteine resulting in methionine formation.</text>
</comment>
<comment type="catalytic activity">
    <reaction evidence="1">
        <text>5-methyltetrahydropteroyltri-L-glutamate + L-homocysteine = tetrahydropteroyltri-L-glutamate + L-methionine</text>
        <dbReference type="Rhea" id="RHEA:21196"/>
        <dbReference type="ChEBI" id="CHEBI:57844"/>
        <dbReference type="ChEBI" id="CHEBI:58140"/>
        <dbReference type="ChEBI" id="CHEBI:58199"/>
        <dbReference type="ChEBI" id="CHEBI:58207"/>
        <dbReference type="EC" id="2.1.1.14"/>
    </reaction>
</comment>
<comment type="cofactor">
    <cofactor evidence="1">
        <name>Zn(2+)</name>
        <dbReference type="ChEBI" id="CHEBI:29105"/>
    </cofactor>
    <text evidence="1">Binds 1 zinc ion per subunit.</text>
</comment>
<comment type="pathway">
    <text evidence="1">Amino-acid biosynthesis; L-methionine biosynthesis via de novo pathway; L-methionine from L-homocysteine (MetE route): step 1/1.</text>
</comment>
<comment type="similarity">
    <text evidence="1">Belongs to the vitamin-B12 independent methionine synthase family.</text>
</comment>
<keyword id="KW-0028">Amino-acid biosynthesis</keyword>
<keyword id="KW-0479">Metal-binding</keyword>
<keyword id="KW-0486">Methionine biosynthesis</keyword>
<keyword id="KW-0489">Methyltransferase</keyword>
<keyword id="KW-1185">Reference proteome</keyword>
<keyword id="KW-0677">Repeat</keyword>
<keyword id="KW-0808">Transferase</keyword>
<keyword id="KW-0862">Zinc</keyword>
<accession>Q8DJY0</accession>
<dbReference type="EC" id="2.1.1.14" evidence="1"/>
<dbReference type="EMBL" id="BA000039">
    <property type="protein sequence ID" value="BAC08643.1"/>
    <property type="molecule type" value="Genomic_DNA"/>
</dbReference>
<dbReference type="RefSeq" id="NP_681881.1">
    <property type="nucleotide sequence ID" value="NC_004113.1"/>
</dbReference>
<dbReference type="RefSeq" id="WP_011056933.1">
    <property type="nucleotide sequence ID" value="NC_004113.1"/>
</dbReference>
<dbReference type="SMR" id="Q8DJY0"/>
<dbReference type="STRING" id="197221.gene:10747685"/>
<dbReference type="EnsemblBacteria" id="BAC08643">
    <property type="protein sequence ID" value="BAC08643"/>
    <property type="gene ID" value="BAC08643"/>
</dbReference>
<dbReference type="KEGG" id="tel:tlr1090"/>
<dbReference type="PATRIC" id="fig|197221.4.peg.1144"/>
<dbReference type="eggNOG" id="COG0620">
    <property type="taxonomic scope" value="Bacteria"/>
</dbReference>
<dbReference type="UniPathway" id="UPA00051">
    <property type="reaction ID" value="UER00082"/>
</dbReference>
<dbReference type="Proteomes" id="UP000000440">
    <property type="component" value="Chromosome"/>
</dbReference>
<dbReference type="GO" id="GO:0003871">
    <property type="term" value="F:5-methyltetrahydropteroyltriglutamate-homocysteine S-methyltransferase activity"/>
    <property type="evidence" value="ECO:0007669"/>
    <property type="project" value="UniProtKB-UniRule"/>
</dbReference>
<dbReference type="GO" id="GO:0008270">
    <property type="term" value="F:zinc ion binding"/>
    <property type="evidence" value="ECO:0007669"/>
    <property type="project" value="InterPro"/>
</dbReference>
<dbReference type="GO" id="GO:0009086">
    <property type="term" value="P:methionine biosynthetic process"/>
    <property type="evidence" value="ECO:0007669"/>
    <property type="project" value="UniProtKB-UniRule"/>
</dbReference>
<dbReference type="GO" id="GO:0032259">
    <property type="term" value="P:methylation"/>
    <property type="evidence" value="ECO:0007669"/>
    <property type="project" value="UniProtKB-KW"/>
</dbReference>
<dbReference type="CDD" id="cd03311">
    <property type="entry name" value="CIMS_C_terminal_like"/>
    <property type="match status" value="1"/>
</dbReference>
<dbReference type="CDD" id="cd03312">
    <property type="entry name" value="CIMS_N_terminal_like"/>
    <property type="match status" value="1"/>
</dbReference>
<dbReference type="Gene3D" id="3.20.20.210">
    <property type="match status" value="2"/>
</dbReference>
<dbReference type="HAMAP" id="MF_00172">
    <property type="entry name" value="Meth_synth"/>
    <property type="match status" value="1"/>
</dbReference>
<dbReference type="InterPro" id="IPR013215">
    <property type="entry name" value="Cbl-indep_Met_Synth_N"/>
</dbReference>
<dbReference type="InterPro" id="IPR006276">
    <property type="entry name" value="Cobalamin-indep_Met_synthase"/>
</dbReference>
<dbReference type="InterPro" id="IPR002629">
    <property type="entry name" value="Met_Synth_C/arc"/>
</dbReference>
<dbReference type="InterPro" id="IPR038071">
    <property type="entry name" value="UROD/MetE-like_sf"/>
</dbReference>
<dbReference type="NCBIfam" id="TIGR01371">
    <property type="entry name" value="met_syn_B12ind"/>
    <property type="match status" value="1"/>
</dbReference>
<dbReference type="NCBIfam" id="NF003556">
    <property type="entry name" value="PRK05222.1"/>
    <property type="match status" value="1"/>
</dbReference>
<dbReference type="PANTHER" id="PTHR30519">
    <property type="entry name" value="5-METHYLTETRAHYDROPTEROYLTRIGLUTAMATE--HOMOCYSTEINE METHYLTRANSFERASE"/>
    <property type="match status" value="1"/>
</dbReference>
<dbReference type="Pfam" id="PF08267">
    <property type="entry name" value="Meth_synt_1"/>
    <property type="match status" value="1"/>
</dbReference>
<dbReference type="Pfam" id="PF01717">
    <property type="entry name" value="Meth_synt_2"/>
    <property type="match status" value="1"/>
</dbReference>
<dbReference type="PIRSF" id="PIRSF000382">
    <property type="entry name" value="MeTrfase_B12_ind"/>
    <property type="match status" value="1"/>
</dbReference>
<dbReference type="SUPFAM" id="SSF51726">
    <property type="entry name" value="UROD/MetE-like"/>
    <property type="match status" value="2"/>
</dbReference>
<name>METE_THEVB</name>
<feature type="chain" id="PRO_0000098673" description="5-methyltetrahydropteroyltriglutamate--homocysteine methyltransferase">
    <location>
        <begin position="1"/>
        <end position="758"/>
    </location>
</feature>
<feature type="active site" description="Proton donor" evidence="1">
    <location>
        <position position="691"/>
    </location>
</feature>
<feature type="binding site" evidence="1">
    <location>
        <begin position="17"/>
        <end position="20"/>
    </location>
    <ligand>
        <name>5-methyltetrahydropteroyltri-L-glutamate</name>
        <dbReference type="ChEBI" id="CHEBI:58207"/>
    </ligand>
</feature>
<feature type="binding site" evidence="1">
    <location>
        <position position="110"/>
    </location>
    <ligand>
        <name>5-methyltetrahydropteroyltri-L-glutamate</name>
        <dbReference type="ChEBI" id="CHEBI:58207"/>
    </ligand>
</feature>
<feature type="binding site" evidence="1">
    <location>
        <begin position="428"/>
        <end position="430"/>
    </location>
    <ligand>
        <name>L-homocysteine</name>
        <dbReference type="ChEBI" id="CHEBI:58199"/>
    </ligand>
</feature>
<feature type="binding site" evidence="1">
    <location>
        <begin position="428"/>
        <end position="430"/>
    </location>
    <ligand>
        <name>L-methionine</name>
        <dbReference type="ChEBI" id="CHEBI:57844"/>
    </ligand>
</feature>
<feature type="binding site" evidence="1">
    <location>
        <position position="481"/>
    </location>
    <ligand>
        <name>L-homocysteine</name>
        <dbReference type="ChEBI" id="CHEBI:58199"/>
    </ligand>
</feature>
<feature type="binding site" evidence="1">
    <location>
        <position position="481"/>
    </location>
    <ligand>
        <name>L-methionine</name>
        <dbReference type="ChEBI" id="CHEBI:57844"/>
    </ligand>
</feature>
<feature type="binding site" evidence="1">
    <location>
        <begin position="512"/>
        <end position="513"/>
    </location>
    <ligand>
        <name>5-methyltetrahydropteroyltri-L-glutamate</name>
        <dbReference type="ChEBI" id="CHEBI:58207"/>
    </ligand>
</feature>
<feature type="binding site" evidence="1">
    <location>
        <position position="558"/>
    </location>
    <ligand>
        <name>5-methyltetrahydropteroyltri-L-glutamate</name>
        <dbReference type="ChEBI" id="CHEBI:58207"/>
    </ligand>
</feature>
<feature type="binding site" evidence="1">
    <location>
        <position position="596"/>
    </location>
    <ligand>
        <name>L-homocysteine</name>
        <dbReference type="ChEBI" id="CHEBI:58199"/>
    </ligand>
</feature>
<feature type="binding site" evidence="1">
    <location>
        <position position="596"/>
    </location>
    <ligand>
        <name>L-methionine</name>
        <dbReference type="ChEBI" id="CHEBI:57844"/>
    </ligand>
</feature>
<feature type="binding site" evidence="1">
    <location>
        <position position="602"/>
    </location>
    <ligand>
        <name>5-methyltetrahydropteroyltri-L-glutamate</name>
        <dbReference type="ChEBI" id="CHEBI:58207"/>
    </ligand>
</feature>
<feature type="binding site" evidence="1">
    <location>
        <position position="638"/>
    </location>
    <ligand>
        <name>Zn(2+)</name>
        <dbReference type="ChEBI" id="CHEBI:29105"/>
        <note>catalytic</note>
    </ligand>
</feature>
<feature type="binding site" evidence="1">
    <location>
        <position position="640"/>
    </location>
    <ligand>
        <name>Zn(2+)</name>
        <dbReference type="ChEBI" id="CHEBI:29105"/>
        <note>catalytic</note>
    </ligand>
</feature>
<feature type="binding site" evidence="1">
    <location>
        <position position="662"/>
    </location>
    <ligand>
        <name>Zn(2+)</name>
        <dbReference type="ChEBI" id="CHEBI:29105"/>
        <note>catalytic</note>
    </ligand>
</feature>
<feature type="binding site" evidence="1">
    <location>
        <position position="723"/>
    </location>
    <ligand>
        <name>Zn(2+)</name>
        <dbReference type="ChEBI" id="CHEBI:29105"/>
        <note>catalytic</note>
    </ligand>
</feature>
<sequence length="758" mass="86264">MTIQTATLGYPRIGKNRELKKALEAFWSNQLDAEALLKTAQDIELQNWQKQLEVGIDRIGIGDLSLYDSVLDWSIRFGIIPERYRSFTGLEQYFAMARGKDGIPALEMTKWFDTNYHYLVPEISEAFQPTDFSDFLETVRRAQTLLGDRAVPIVLGPLTLLRLSRLETNLEQAVSYLRDRYLILLRELKNLGVVEVQIHEPALVLEEADSFKSFYQSTFDTLRQANLPLHLVTYFDDLGAAWPWVMELPVTCISLDFTRGHNLALLKEYGFPADKQLGVGIIDGRNIWKIRPESVLSTLETIQSITANIRLHPSSSLQFVPYDAKREVKLPEPLRDVLSFAEQKLDEVVLLARVLNSNDGTNREILMKNPELTAIQAQWKAFEQFSPVNPTVQARLRNLSVRDLERPLPYEQRRTLQPTLPPLPTTTIGSFPQTAEVRQLRVKLKRHEITQAEYEAAIDEEIAKCVRLQEEVGLDVLVHGEFERSDMVEFFGQQLSGFAFTEHGWVQSYGSRCVRPPIIYGDIARPQPMTVREFKVAQSLTDKIVKAMLTGPVTMINWSFTRTDIPRSEQAMQIALALRDEVADLEAAGAKMIQIDEPALREGLPLKAERWNEYLSWAVDAFRLAAGVAKPETQIHTHMCYSEFGDIIEHIERLDADVLSIENSRSNNETLFQITDAGYRHQVGVGVYDVHSPAVPSVEQLVQQLRTSVANLAPEQIWVNPDCGLKTRHWEEVIPSLKNMVEATKTIRQEVMQSKNNA</sequence>
<reference key="1">
    <citation type="journal article" date="2002" name="DNA Res.">
        <title>Complete genome structure of the thermophilic cyanobacterium Thermosynechococcus elongatus BP-1.</title>
        <authorList>
            <person name="Nakamura Y."/>
            <person name="Kaneko T."/>
            <person name="Sato S."/>
            <person name="Ikeuchi M."/>
            <person name="Katoh H."/>
            <person name="Sasamoto S."/>
            <person name="Watanabe A."/>
            <person name="Iriguchi M."/>
            <person name="Kawashima K."/>
            <person name="Kimura T."/>
            <person name="Kishida Y."/>
            <person name="Kiyokawa C."/>
            <person name="Kohara M."/>
            <person name="Matsumoto M."/>
            <person name="Matsuno A."/>
            <person name="Nakazaki N."/>
            <person name="Shimpo S."/>
            <person name="Sugimoto M."/>
            <person name="Takeuchi C."/>
            <person name="Yamada M."/>
            <person name="Tabata S."/>
        </authorList>
    </citation>
    <scope>NUCLEOTIDE SEQUENCE [LARGE SCALE GENOMIC DNA]</scope>
    <source>
        <strain>NIES-2133 / IAM M-273 / BP-1</strain>
    </source>
</reference>
<evidence type="ECO:0000255" key="1">
    <source>
        <dbReference type="HAMAP-Rule" id="MF_00172"/>
    </source>
</evidence>
<proteinExistence type="inferred from homology"/>